<organism>
    <name type="scientific">Yersinia pestis</name>
    <dbReference type="NCBI Taxonomy" id="632"/>
    <lineage>
        <taxon>Bacteria</taxon>
        <taxon>Pseudomonadati</taxon>
        <taxon>Pseudomonadota</taxon>
        <taxon>Gammaproteobacteria</taxon>
        <taxon>Enterobacterales</taxon>
        <taxon>Yersiniaceae</taxon>
        <taxon>Yersinia</taxon>
    </lineage>
</organism>
<evidence type="ECO:0000255" key="1">
    <source>
        <dbReference type="PROSITE-ProRule" id="PRU00112"/>
    </source>
</evidence>
<evidence type="ECO:0000255" key="2">
    <source>
        <dbReference type="PROSITE-ProRule" id="PRU00169"/>
    </source>
</evidence>
<evidence type="ECO:0000305" key="3"/>
<proteinExistence type="inferred from homology"/>
<accession>Q8ZBV2</accession>
<accession>Q0WC03</accession>
<accession>Q8D185</accession>
<protein>
    <recommendedName>
        <fullName>Uncharacterized response regulatory protein YPO3287/y0902/YP_0397</fullName>
    </recommendedName>
</protein>
<comment type="sequence caution" evidence="3">
    <conflict type="erroneous initiation">
        <sequence resource="EMBL-CDS" id="AAM84485"/>
    </conflict>
</comment>
<comment type="sequence caution" evidence="3">
    <conflict type="erroneous initiation">
        <sequence resource="EMBL-CDS" id="AAS60669"/>
    </conflict>
</comment>
<feature type="chain" id="PRO_0000081376" description="Uncharacterized response regulatory protein YPO3287/y0902/YP_0397">
    <location>
        <begin position="1"/>
        <end position="238"/>
    </location>
</feature>
<feature type="domain" description="Response regulatory" evidence="2">
    <location>
        <begin position="3"/>
        <end position="116"/>
    </location>
</feature>
<feature type="domain" description="HTH LytTR-type" evidence="1">
    <location>
        <begin position="136"/>
        <end position="237"/>
    </location>
</feature>
<feature type="modified residue" description="4-aspartylphosphate" evidence="2">
    <location>
        <position position="54"/>
    </location>
</feature>
<feature type="sequence conflict" description="In Ref. 2 and 3." evidence="3" ref="2 3">
    <original>K</original>
    <variation>E</variation>
    <location>
        <position position="130"/>
    </location>
</feature>
<name>Y3287_YERPE</name>
<sequence>MLRVIIVDDEQPAREDLRERLNEEHGIEIVAECSNALEAIPAIQRLQPDVVFLDIQMPRINGLELASMLNPESMPHIVFVTAYDEYAIRAFEEHAFDYLLKPLDHQRLAKTLTRLSRDLIVKNNLHKVIKPILRHIPCSGHNRIFLLKIEEVEYLSSELSGVHVVGTVQSGYTQLSLKTLEEKTPFIRCHRQYMVNTEQLGEIQLMDNGAAEVITRSGKHIPVSRRYLKSLKEKLGIA</sequence>
<keyword id="KW-0238">DNA-binding</keyword>
<keyword id="KW-0597">Phosphoprotein</keyword>
<keyword id="KW-1185">Reference proteome</keyword>
<keyword id="KW-0804">Transcription</keyword>
<keyword id="KW-0805">Transcription regulation</keyword>
<keyword id="KW-0902">Two-component regulatory system</keyword>
<gene>
    <name type="ordered locus">YPO3287</name>
    <name type="ordered locus">y0902</name>
    <name type="ordered locus">YP_0397</name>
</gene>
<dbReference type="EMBL" id="AL590842">
    <property type="protein sequence ID" value="CAL21879.1"/>
    <property type="molecule type" value="Genomic_DNA"/>
</dbReference>
<dbReference type="EMBL" id="AE009952">
    <property type="protein sequence ID" value="AAM84485.1"/>
    <property type="status" value="ALT_INIT"/>
    <property type="molecule type" value="Genomic_DNA"/>
</dbReference>
<dbReference type="EMBL" id="AE017042">
    <property type="protein sequence ID" value="AAS60669.1"/>
    <property type="status" value="ALT_INIT"/>
    <property type="molecule type" value="Genomic_DNA"/>
</dbReference>
<dbReference type="PIR" id="AD0399">
    <property type="entry name" value="AD0399"/>
</dbReference>
<dbReference type="RefSeq" id="YP_002348185.1">
    <property type="nucleotide sequence ID" value="NC_003143.1"/>
</dbReference>
<dbReference type="SMR" id="Q8ZBV2"/>
<dbReference type="IntAct" id="Q8ZBV2">
    <property type="interactions" value="1"/>
</dbReference>
<dbReference type="STRING" id="214092.YPO3287"/>
<dbReference type="PaxDb" id="214092-YPO3287"/>
<dbReference type="DNASU" id="1145849"/>
<dbReference type="EnsemblBacteria" id="AAS60669">
    <property type="protein sequence ID" value="AAS60669"/>
    <property type="gene ID" value="YP_0397"/>
</dbReference>
<dbReference type="KEGG" id="ype:YPO3287"/>
<dbReference type="KEGG" id="ypk:y0902"/>
<dbReference type="KEGG" id="ypm:YP_0397"/>
<dbReference type="PATRIC" id="fig|214092.21.peg.3755"/>
<dbReference type="eggNOG" id="COG3279">
    <property type="taxonomic scope" value="Bacteria"/>
</dbReference>
<dbReference type="HOGENOM" id="CLU_000445_14_1_6"/>
<dbReference type="OMA" id="PLIRCHR"/>
<dbReference type="OrthoDB" id="236568at2"/>
<dbReference type="Proteomes" id="UP000000815">
    <property type="component" value="Chromosome"/>
</dbReference>
<dbReference type="Proteomes" id="UP000001019">
    <property type="component" value="Chromosome"/>
</dbReference>
<dbReference type="Proteomes" id="UP000002490">
    <property type="component" value="Chromosome"/>
</dbReference>
<dbReference type="GO" id="GO:0005829">
    <property type="term" value="C:cytosol"/>
    <property type="evidence" value="ECO:0000318"/>
    <property type="project" value="GO_Central"/>
</dbReference>
<dbReference type="GO" id="GO:0032993">
    <property type="term" value="C:protein-DNA complex"/>
    <property type="evidence" value="ECO:0000318"/>
    <property type="project" value="GO_Central"/>
</dbReference>
<dbReference type="GO" id="GO:0000156">
    <property type="term" value="F:phosphorelay response regulator activity"/>
    <property type="evidence" value="ECO:0000318"/>
    <property type="project" value="GO_Central"/>
</dbReference>
<dbReference type="GO" id="GO:0000976">
    <property type="term" value="F:transcription cis-regulatory region binding"/>
    <property type="evidence" value="ECO:0000318"/>
    <property type="project" value="GO_Central"/>
</dbReference>
<dbReference type="GO" id="GO:0006355">
    <property type="term" value="P:regulation of DNA-templated transcription"/>
    <property type="evidence" value="ECO:0000318"/>
    <property type="project" value="GO_Central"/>
</dbReference>
<dbReference type="CDD" id="cd17532">
    <property type="entry name" value="REC_LytTR_AlgR-like"/>
    <property type="match status" value="1"/>
</dbReference>
<dbReference type="FunFam" id="2.40.50.1020:FF:000001">
    <property type="entry name" value="Two-component response regulator yehT"/>
    <property type="match status" value="1"/>
</dbReference>
<dbReference type="FunFam" id="3.40.50.2300:FF:000051">
    <property type="entry name" value="Two-component response regulator yehT"/>
    <property type="match status" value="1"/>
</dbReference>
<dbReference type="Gene3D" id="3.40.50.2300">
    <property type="match status" value="1"/>
</dbReference>
<dbReference type="Gene3D" id="2.40.50.1020">
    <property type="entry name" value="LytTr DNA-binding domain"/>
    <property type="match status" value="1"/>
</dbReference>
<dbReference type="InterPro" id="IPR011006">
    <property type="entry name" value="CheY-like_superfamily"/>
</dbReference>
<dbReference type="InterPro" id="IPR046947">
    <property type="entry name" value="LytR-like"/>
</dbReference>
<dbReference type="InterPro" id="IPR007492">
    <property type="entry name" value="LytTR_DNA-bd_dom"/>
</dbReference>
<dbReference type="InterPro" id="IPR001789">
    <property type="entry name" value="Sig_transdc_resp-reg_receiver"/>
</dbReference>
<dbReference type="NCBIfam" id="NF008677">
    <property type="entry name" value="PRK11697.1"/>
    <property type="match status" value="1"/>
</dbReference>
<dbReference type="PANTHER" id="PTHR37299:SF1">
    <property type="entry name" value="STAGE 0 SPORULATION PROTEIN A HOMOLOG"/>
    <property type="match status" value="1"/>
</dbReference>
<dbReference type="PANTHER" id="PTHR37299">
    <property type="entry name" value="TRANSCRIPTIONAL REGULATOR-RELATED"/>
    <property type="match status" value="1"/>
</dbReference>
<dbReference type="Pfam" id="PF04397">
    <property type="entry name" value="LytTR"/>
    <property type="match status" value="1"/>
</dbReference>
<dbReference type="Pfam" id="PF00072">
    <property type="entry name" value="Response_reg"/>
    <property type="match status" value="1"/>
</dbReference>
<dbReference type="SMART" id="SM00850">
    <property type="entry name" value="LytTR"/>
    <property type="match status" value="1"/>
</dbReference>
<dbReference type="SMART" id="SM00448">
    <property type="entry name" value="REC"/>
    <property type="match status" value="1"/>
</dbReference>
<dbReference type="SUPFAM" id="SSF52172">
    <property type="entry name" value="CheY-like"/>
    <property type="match status" value="1"/>
</dbReference>
<dbReference type="PROSITE" id="PS50930">
    <property type="entry name" value="HTH_LYTTR"/>
    <property type="match status" value="1"/>
</dbReference>
<dbReference type="PROSITE" id="PS50110">
    <property type="entry name" value="RESPONSE_REGULATORY"/>
    <property type="match status" value="1"/>
</dbReference>
<reference key="1">
    <citation type="journal article" date="2001" name="Nature">
        <title>Genome sequence of Yersinia pestis, the causative agent of plague.</title>
        <authorList>
            <person name="Parkhill J."/>
            <person name="Wren B.W."/>
            <person name="Thomson N.R."/>
            <person name="Titball R.W."/>
            <person name="Holden M.T.G."/>
            <person name="Prentice M.B."/>
            <person name="Sebaihia M."/>
            <person name="James K.D."/>
            <person name="Churcher C.M."/>
            <person name="Mungall K.L."/>
            <person name="Baker S."/>
            <person name="Basham D."/>
            <person name="Bentley S.D."/>
            <person name="Brooks K."/>
            <person name="Cerdeno-Tarraga A.-M."/>
            <person name="Chillingworth T."/>
            <person name="Cronin A."/>
            <person name="Davies R.M."/>
            <person name="Davis P."/>
            <person name="Dougan G."/>
            <person name="Feltwell T."/>
            <person name="Hamlin N."/>
            <person name="Holroyd S."/>
            <person name="Jagels K."/>
            <person name="Karlyshev A.V."/>
            <person name="Leather S."/>
            <person name="Moule S."/>
            <person name="Oyston P.C.F."/>
            <person name="Quail M.A."/>
            <person name="Rutherford K.M."/>
            <person name="Simmonds M."/>
            <person name="Skelton J."/>
            <person name="Stevens K."/>
            <person name="Whitehead S."/>
            <person name="Barrell B.G."/>
        </authorList>
    </citation>
    <scope>NUCLEOTIDE SEQUENCE [LARGE SCALE GENOMIC DNA]</scope>
    <source>
        <strain>CO-92 / Biovar Orientalis</strain>
    </source>
</reference>
<reference key="2">
    <citation type="journal article" date="2002" name="J. Bacteriol.">
        <title>Genome sequence of Yersinia pestis KIM.</title>
        <authorList>
            <person name="Deng W."/>
            <person name="Burland V."/>
            <person name="Plunkett G. III"/>
            <person name="Boutin A."/>
            <person name="Mayhew G.F."/>
            <person name="Liss P."/>
            <person name="Perna N.T."/>
            <person name="Rose D.J."/>
            <person name="Mau B."/>
            <person name="Zhou S."/>
            <person name="Schwartz D.C."/>
            <person name="Fetherston J.D."/>
            <person name="Lindler L.E."/>
            <person name="Brubaker R.R."/>
            <person name="Plano G.V."/>
            <person name="Straley S.C."/>
            <person name="McDonough K.A."/>
            <person name="Nilles M.L."/>
            <person name="Matson J.S."/>
            <person name="Blattner F.R."/>
            <person name="Perry R.D."/>
        </authorList>
    </citation>
    <scope>NUCLEOTIDE SEQUENCE [LARGE SCALE GENOMIC DNA]</scope>
    <source>
        <strain>KIM10+ / Biovar Mediaevalis</strain>
    </source>
</reference>
<reference key="3">
    <citation type="journal article" date="2004" name="DNA Res.">
        <title>Complete genome sequence of Yersinia pestis strain 91001, an isolate avirulent to humans.</title>
        <authorList>
            <person name="Song Y."/>
            <person name="Tong Z."/>
            <person name="Wang J."/>
            <person name="Wang L."/>
            <person name="Guo Z."/>
            <person name="Han Y."/>
            <person name="Zhang J."/>
            <person name="Pei D."/>
            <person name="Zhou D."/>
            <person name="Qin H."/>
            <person name="Pang X."/>
            <person name="Han Y."/>
            <person name="Zhai J."/>
            <person name="Li M."/>
            <person name="Cui B."/>
            <person name="Qi Z."/>
            <person name="Jin L."/>
            <person name="Dai R."/>
            <person name="Chen F."/>
            <person name="Li S."/>
            <person name="Ye C."/>
            <person name="Du Z."/>
            <person name="Lin W."/>
            <person name="Wang J."/>
            <person name="Yu J."/>
            <person name="Yang H."/>
            <person name="Wang J."/>
            <person name="Huang P."/>
            <person name="Yang R."/>
        </authorList>
    </citation>
    <scope>NUCLEOTIDE SEQUENCE [LARGE SCALE GENOMIC DNA]</scope>
    <source>
        <strain>91001 / Biovar Mediaevalis</strain>
    </source>
</reference>